<name>ARGE_SALDC</name>
<dbReference type="EC" id="3.5.1.16" evidence="1"/>
<dbReference type="EMBL" id="CP001144">
    <property type="protein sequence ID" value="ACH77352.1"/>
    <property type="molecule type" value="Genomic_DNA"/>
</dbReference>
<dbReference type="RefSeq" id="WP_000800208.1">
    <property type="nucleotide sequence ID" value="NC_011205.1"/>
</dbReference>
<dbReference type="SMR" id="B5FPX2"/>
<dbReference type="MEROPS" id="M20.974"/>
<dbReference type="KEGG" id="sed:SeD_A4525"/>
<dbReference type="HOGENOM" id="CLU_021802_2_4_6"/>
<dbReference type="UniPathway" id="UPA00068">
    <property type="reaction ID" value="UER00110"/>
</dbReference>
<dbReference type="Proteomes" id="UP000008322">
    <property type="component" value="Chromosome"/>
</dbReference>
<dbReference type="GO" id="GO:0005737">
    <property type="term" value="C:cytoplasm"/>
    <property type="evidence" value="ECO:0007669"/>
    <property type="project" value="UniProtKB-SubCell"/>
</dbReference>
<dbReference type="GO" id="GO:0008777">
    <property type="term" value="F:acetylornithine deacetylase activity"/>
    <property type="evidence" value="ECO:0007669"/>
    <property type="project" value="UniProtKB-UniRule"/>
</dbReference>
<dbReference type="GO" id="GO:0008270">
    <property type="term" value="F:zinc ion binding"/>
    <property type="evidence" value="ECO:0007669"/>
    <property type="project" value="UniProtKB-UniRule"/>
</dbReference>
<dbReference type="GO" id="GO:0006526">
    <property type="term" value="P:L-arginine biosynthetic process"/>
    <property type="evidence" value="ECO:0007669"/>
    <property type="project" value="UniProtKB-UniRule"/>
</dbReference>
<dbReference type="CDD" id="cd03894">
    <property type="entry name" value="M20_ArgE"/>
    <property type="match status" value="1"/>
</dbReference>
<dbReference type="FunFam" id="3.30.70.360:FF:000003">
    <property type="entry name" value="Acetylornithine deacetylase"/>
    <property type="match status" value="1"/>
</dbReference>
<dbReference type="Gene3D" id="3.30.70.360">
    <property type="match status" value="1"/>
</dbReference>
<dbReference type="Gene3D" id="3.40.630.10">
    <property type="entry name" value="Zn peptidases"/>
    <property type="match status" value="1"/>
</dbReference>
<dbReference type="HAMAP" id="MF_01108">
    <property type="entry name" value="ArgE"/>
    <property type="match status" value="1"/>
</dbReference>
<dbReference type="InterPro" id="IPR010169">
    <property type="entry name" value="AcOrn-deacetyl"/>
</dbReference>
<dbReference type="InterPro" id="IPR001261">
    <property type="entry name" value="ArgE/DapE_CS"/>
</dbReference>
<dbReference type="InterPro" id="IPR036264">
    <property type="entry name" value="Bact_exopeptidase_dim_dom"/>
</dbReference>
<dbReference type="InterPro" id="IPR002933">
    <property type="entry name" value="Peptidase_M20"/>
</dbReference>
<dbReference type="InterPro" id="IPR011650">
    <property type="entry name" value="Peptidase_M20_dimer"/>
</dbReference>
<dbReference type="InterPro" id="IPR050072">
    <property type="entry name" value="Peptidase_M20A"/>
</dbReference>
<dbReference type="NCBIfam" id="TIGR01892">
    <property type="entry name" value="AcOrn-deacetyl"/>
    <property type="match status" value="1"/>
</dbReference>
<dbReference type="NCBIfam" id="NF003474">
    <property type="entry name" value="PRK05111.1"/>
    <property type="match status" value="1"/>
</dbReference>
<dbReference type="PANTHER" id="PTHR43808">
    <property type="entry name" value="ACETYLORNITHINE DEACETYLASE"/>
    <property type="match status" value="1"/>
</dbReference>
<dbReference type="PANTHER" id="PTHR43808:SF1">
    <property type="entry name" value="ACETYLORNITHINE DEACETYLASE"/>
    <property type="match status" value="1"/>
</dbReference>
<dbReference type="Pfam" id="PF07687">
    <property type="entry name" value="M20_dimer"/>
    <property type="match status" value="1"/>
</dbReference>
<dbReference type="Pfam" id="PF01546">
    <property type="entry name" value="Peptidase_M20"/>
    <property type="match status" value="1"/>
</dbReference>
<dbReference type="SUPFAM" id="SSF55031">
    <property type="entry name" value="Bacterial exopeptidase dimerisation domain"/>
    <property type="match status" value="1"/>
</dbReference>
<dbReference type="SUPFAM" id="SSF53187">
    <property type="entry name" value="Zn-dependent exopeptidases"/>
    <property type="match status" value="1"/>
</dbReference>
<dbReference type="PROSITE" id="PS00758">
    <property type="entry name" value="ARGE_DAPE_CPG2_1"/>
    <property type="match status" value="1"/>
</dbReference>
<dbReference type="PROSITE" id="PS00759">
    <property type="entry name" value="ARGE_DAPE_CPG2_2"/>
    <property type="match status" value="1"/>
</dbReference>
<proteinExistence type="inferred from homology"/>
<sequence>MKNVLPPFIEIYRALIATPSISATEESLDQSNASLITLLAGWFSDLGFNVEVQPVPGTRNKFNMLASTGHGAGGLLLTGHTDTVPFDDGRWTRDPFTLTEHDNKLYGLGTADMKGFFAFILDALRDVDVTKLKKPLYILATADEETSMAGARYFSETTALRPDCAIIGEPTSLQPIRAHKGHISNVVRVLGQSGHSSDPARGVNAIELMHDAIGHIMQLRDSLKARYHYEAFTVPYPTLNLGHIHGGDASNRICACCELHMDIRPLPGMTLNDLNGLLNDALAPVSERWPGRLTVAELHPPIPGYECPPDHQLVEVVEKLLGTKTDVVNYCTEAPFMQTLCPTLVLGPGSINQAHQPDEYLETRFIKPTRELITQVVHHFCWH</sequence>
<organism>
    <name type="scientific">Salmonella dublin (strain CT_02021853)</name>
    <dbReference type="NCBI Taxonomy" id="439851"/>
    <lineage>
        <taxon>Bacteria</taxon>
        <taxon>Pseudomonadati</taxon>
        <taxon>Pseudomonadota</taxon>
        <taxon>Gammaproteobacteria</taxon>
        <taxon>Enterobacterales</taxon>
        <taxon>Enterobacteriaceae</taxon>
        <taxon>Salmonella</taxon>
    </lineage>
</organism>
<feature type="chain" id="PRO_1000137074" description="Acetylornithine deacetylase">
    <location>
        <begin position="1"/>
        <end position="383"/>
    </location>
</feature>
<feature type="active site" evidence="1">
    <location>
        <position position="82"/>
    </location>
</feature>
<feature type="active site" evidence="1">
    <location>
        <position position="144"/>
    </location>
</feature>
<feature type="binding site" evidence="1">
    <location>
        <position position="80"/>
    </location>
    <ligand>
        <name>Zn(2+)</name>
        <dbReference type="ChEBI" id="CHEBI:29105"/>
        <label>1</label>
    </ligand>
</feature>
<feature type="binding site" evidence="1">
    <location>
        <position position="112"/>
    </location>
    <ligand>
        <name>Zn(2+)</name>
        <dbReference type="ChEBI" id="CHEBI:29105"/>
        <label>1</label>
    </ligand>
</feature>
<feature type="binding site" evidence="1">
    <location>
        <position position="112"/>
    </location>
    <ligand>
        <name>Zn(2+)</name>
        <dbReference type="ChEBI" id="CHEBI:29105"/>
        <label>2</label>
    </ligand>
</feature>
<feature type="binding site" evidence="1">
    <location>
        <position position="145"/>
    </location>
    <ligand>
        <name>Zn(2+)</name>
        <dbReference type="ChEBI" id="CHEBI:29105"/>
        <label>2</label>
    </ligand>
</feature>
<feature type="binding site" evidence="1">
    <location>
        <position position="169"/>
    </location>
    <ligand>
        <name>Zn(2+)</name>
        <dbReference type="ChEBI" id="CHEBI:29105"/>
        <label>1</label>
    </ligand>
</feature>
<feature type="binding site" evidence="1">
    <location>
        <position position="355"/>
    </location>
    <ligand>
        <name>Zn(2+)</name>
        <dbReference type="ChEBI" id="CHEBI:29105"/>
        <label>2</label>
    </ligand>
</feature>
<evidence type="ECO:0000255" key="1">
    <source>
        <dbReference type="HAMAP-Rule" id="MF_01108"/>
    </source>
</evidence>
<keyword id="KW-0028">Amino-acid biosynthesis</keyword>
<keyword id="KW-0055">Arginine biosynthesis</keyword>
<keyword id="KW-0170">Cobalt</keyword>
<keyword id="KW-0963">Cytoplasm</keyword>
<keyword id="KW-0378">Hydrolase</keyword>
<keyword id="KW-0479">Metal-binding</keyword>
<keyword id="KW-0862">Zinc</keyword>
<gene>
    <name evidence="1" type="primary">argE</name>
    <name type="ordered locus">SeD_A4525</name>
</gene>
<comment type="function">
    <text evidence="1">Catalyzes the hydrolysis of the amide bond of N(2)-acetylated L-amino acids. Cleaves the acetyl group from N-acetyl-L-ornithine to form L-ornithine, an intermediate in L-arginine biosynthesis pathway, and a branchpoint in the synthesis of polyamines.</text>
</comment>
<comment type="catalytic activity">
    <reaction evidence="1">
        <text>N(2)-acetyl-L-ornithine + H2O = L-ornithine + acetate</text>
        <dbReference type="Rhea" id="RHEA:15941"/>
        <dbReference type="ChEBI" id="CHEBI:15377"/>
        <dbReference type="ChEBI" id="CHEBI:30089"/>
        <dbReference type="ChEBI" id="CHEBI:46911"/>
        <dbReference type="ChEBI" id="CHEBI:57805"/>
        <dbReference type="EC" id="3.5.1.16"/>
    </reaction>
</comment>
<comment type="cofactor">
    <cofactor evidence="1">
        <name>Zn(2+)</name>
        <dbReference type="ChEBI" id="CHEBI:29105"/>
    </cofactor>
    <cofactor evidence="1">
        <name>Co(2+)</name>
        <dbReference type="ChEBI" id="CHEBI:48828"/>
    </cofactor>
    <text evidence="1">Binds 2 Zn(2+) or Co(2+) ions per subunit.</text>
</comment>
<comment type="cofactor">
    <cofactor evidence="1">
        <name>glutathione</name>
        <dbReference type="ChEBI" id="CHEBI:57925"/>
    </cofactor>
</comment>
<comment type="pathway">
    <text evidence="1">Amino-acid biosynthesis; L-arginine biosynthesis; L-ornithine from N(2)-acetyl-L-ornithine (linear): step 1/1.</text>
</comment>
<comment type="subunit">
    <text evidence="1">Homodimer.</text>
</comment>
<comment type="subcellular location">
    <subcellularLocation>
        <location evidence="1">Cytoplasm</location>
    </subcellularLocation>
</comment>
<comment type="similarity">
    <text evidence="1">Belongs to the peptidase M20A family. ArgE subfamily.</text>
</comment>
<protein>
    <recommendedName>
        <fullName evidence="1">Acetylornithine deacetylase</fullName>
        <shortName evidence="1">AO</shortName>
        <shortName evidence="1">Acetylornithinase</shortName>
        <ecNumber evidence="1">3.5.1.16</ecNumber>
    </recommendedName>
    <alternativeName>
        <fullName evidence="1">N-acetylornithinase</fullName>
        <shortName evidence="1">NAO</shortName>
    </alternativeName>
</protein>
<accession>B5FPX2</accession>
<reference key="1">
    <citation type="journal article" date="2011" name="J. Bacteriol.">
        <title>Comparative genomics of 28 Salmonella enterica isolates: evidence for CRISPR-mediated adaptive sublineage evolution.</title>
        <authorList>
            <person name="Fricke W.F."/>
            <person name="Mammel M.K."/>
            <person name="McDermott P.F."/>
            <person name="Tartera C."/>
            <person name="White D.G."/>
            <person name="Leclerc J.E."/>
            <person name="Ravel J."/>
            <person name="Cebula T.A."/>
        </authorList>
    </citation>
    <scope>NUCLEOTIDE SEQUENCE [LARGE SCALE GENOMIC DNA]</scope>
    <source>
        <strain>CT_02021853</strain>
    </source>
</reference>